<feature type="chain" id="PRO_0000278631" description="Meiotically up-regulated gene 191 protein">
    <location>
        <begin position="1"/>
        <end position="442"/>
    </location>
</feature>
<feature type="region of interest" description="Disordered" evidence="1">
    <location>
        <begin position="416"/>
        <end position="442"/>
    </location>
</feature>
<feature type="compositionally biased region" description="Polar residues" evidence="1">
    <location>
        <begin position="416"/>
        <end position="429"/>
    </location>
</feature>
<feature type="compositionally biased region" description="Basic and acidic residues" evidence="1">
    <location>
        <begin position="433"/>
        <end position="442"/>
    </location>
</feature>
<feature type="modified residue" description="Phosphothreonine" evidence="4">
    <location>
        <position position="361"/>
    </location>
</feature>
<keyword id="KW-0963">Cytoplasm</keyword>
<keyword id="KW-0469">Meiosis</keyword>
<keyword id="KW-0539">Nucleus</keyword>
<keyword id="KW-0597">Phosphoprotein</keyword>
<keyword id="KW-1185">Reference proteome</keyword>
<name>MU191_SCHPO</name>
<reference key="1">
    <citation type="journal article" date="2002" name="Nature">
        <title>The genome sequence of Schizosaccharomyces pombe.</title>
        <authorList>
            <person name="Wood V."/>
            <person name="Gwilliam R."/>
            <person name="Rajandream M.A."/>
            <person name="Lyne M.H."/>
            <person name="Lyne R."/>
            <person name="Stewart A."/>
            <person name="Sgouros J.G."/>
            <person name="Peat N."/>
            <person name="Hayles J."/>
            <person name="Baker S.G."/>
            <person name="Basham D."/>
            <person name="Bowman S."/>
            <person name="Brooks K."/>
            <person name="Brown D."/>
            <person name="Brown S."/>
            <person name="Chillingworth T."/>
            <person name="Churcher C.M."/>
            <person name="Collins M."/>
            <person name="Connor R."/>
            <person name="Cronin A."/>
            <person name="Davis P."/>
            <person name="Feltwell T."/>
            <person name="Fraser A."/>
            <person name="Gentles S."/>
            <person name="Goble A."/>
            <person name="Hamlin N."/>
            <person name="Harris D.E."/>
            <person name="Hidalgo J."/>
            <person name="Hodgson G."/>
            <person name="Holroyd S."/>
            <person name="Hornsby T."/>
            <person name="Howarth S."/>
            <person name="Huckle E.J."/>
            <person name="Hunt S."/>
            <person name="Jagels K."/>
            <person name="James K.D."/>
            <person name="Jones L."/>
            <person name="Jones M."/>
            <person name="Leather S."/>
            <person name="McDonald S."/>
            <person name="McLean J."/>
            <person name="Mooney P."/>
            <person name="Moule S."/>
            <person name="Mungall K.L."/>
            <person name="Murphy L.D."/>
            <person name="Niblett D."/>
            <person name="Odell C."/>
            <person name="Oliver K."/>
            <person name="O'Neil S."/>
            <person name="Pearson D."/>
            <person name="Quail M.A."/>
            <person name="Rabbinowitsch E."/>
            <person name="Rutherford K.M."/>
            <person name="Rutter S."/>
            <person name="Saunders D."/>
            <person name="Seeger K."/>
            <person name="Sharp S."/>
            <person name="Skelton J."/>
            <person name="Simmonds M.N."/>
            <person name="Squares R."/>
            <person name="Squares S."/>
            <person name="Stevens K."/>
            <person name="Taylor K."/>
            <person name="Taylor R.G."/>
            <person name="Tivey A."/>
            <person name="Walsh S.V."/>
            <person name="Warren T."/>
            <person name="Whitehead S."/>
            <person name="Woodward J.R."/>
            <person name="Volckaert G."/>
            <person name="Aert R."/>
            <person name="Robben J."/>
            <person name="Grymonprez B."/>
            <person name="Weltjens I."/>
            <person name="Vanstreels E."/>
            <person name="Rieger M."/>
            <person name="Schaefer M."/>
            <person name="Mueller-Auer S."/>
            <person name="Gabel C."/>
            <person name="Fuchs M."/>
            <person name="Duesterhoeft A."/>
            <person name="Fritzc C."/>
            <person name="Holzer E."/>
            <person name="Moestl D."/>
            <person name="Hilbert H."/>
            <person name="Borzym K."/>
            <person name="Langer I."/>
            <person name="Beck A."/>
            <person name="Lehrach H."/>
            <person name="Reinhardt R."/>
            <person name="Pohl T.M."/>
            <person name="Eger P."/>
            <person name="Zimmermann W."/>
            <person name="Wedler H."/>
            <person name="Wambutt R."/>
            <person name="Purnelle B."/>
            <person name="Goffeau A."/>
            <person name="Cadieu E."/>
            <person name="Dreano S."/>
            <person name="Gloux S."/>
            <person name="Lelaure V."/>
            <person name="Mottier S."/>
            <person name="Galibert F."/>
            <person name="Aves S.J."/>
            <person name="Xiang Z."/>
            <person name="Hunt C."/>
            <person name="Moore K."/>
            <person name="Hurst S.M."/>
            <person name="Lucas M."/>
            <person name="Rochet M."/>
            <person name="Gaillardin C."/>
            <person name="Tallada V.A."/>
            <person name="Garzon A."/>
            <person name="Thode G."/>
            <person name="Daga R.R."/>
            <person name="Cruzado L."/>
            <person name="Jimenez J."/>
            <person name="Sanchez M."/>
            <person name="del Rey F."/>
            <person name="Benito J."/>
            <person name="Dominguez A."/>
            <person name="Revuelta J.L."/>
            <person name="Moreno S."/>
            <person name="Armstrong J."/>
            <person name="Forsburg S.L."/>
            <person name="Cerutti L."/>
            <person name="Lowe T."/>
            <person name="McCombie W.R."/>
            <person name="Paulsen I."/>
            <person name="Potashkin J."/>
            <person name="Shpakovski G.V."/>
            <person name="Ussery D."/>
            <person name="Barrell B.G."/>
            <person name="Nurse P."/>
        </authorList>
    </citation>
    <scope>NUCLEOTIDE SEQUENCE [LARGE SCALE GENOMIC DNA]</scope>
    <source>
        <strain>972 / ATCC 24843</strain>
    </source>
</reference>
<reference key="2">
    <citation type="journal article" date="2005" name="Curr. Biol.">
        <title>A large-scale screen in S. pombe identifies seven novel genes required for critical meiotic events.</title>
        <authorList>
            <person name="Martin-Castellanos C."/>
            <person name="Blanco M."/>
            <person name="Rozalen A.E."/>
            <person name="Perez-Hidalgo L."/>
            <person name="Garcia A.I."/>
            <person name="Conde F."/>
            <person name="Mata J."/>
            <person name="Ellermeier C."/>
            <person name="Davis L."/>
            <person name="San-Segundo P."/>
            <person name="Smith G.R."/>
            <person name="Moreno S."/>
        </authorList>
    </citation>
    <scope>FUNCTION IN MEIOSIS</scope>
</reference>
<reference key="3">
    <citation type="journal article" date="2006" name="Nat. Biotechnol.">
        <title>ORFeome cloning and global analysis of protein localization in the fission yeast Schizosaccharomyces pombe.</title>
        <authorList>
            <person name="Matsuyama A."/>
            <person name="Arai R."/>
            <person name="Yashiroda Y."/>
            <person name="Shirai A."/>
            <person name="Kamata A."/>
            <person name="Sekido S."/>
            <person name="Kobayashi Y."/>
            <person name="Hashimoto A."/>
            <person name="Hamamoto M."/>
            <person name="Hiraoka Y."/>
            <person name="Horinouchi S."/>
            <person name="Yoshida M."/>
        </authorList>
    </citation>
    <scope>SUBCELLULAR LOCATION [LARGE SCALE ANALYSIS]</scope>
</reference>
<reference key="4">
    <citation type="journal article" date="2008" name="J. Proteome Res.">
        <title>Phosphoproteome analysis of fission yeast.</title>
        <authorList>
            <person name="Wilson-Grady J.T."/>
            <person name="Villen J."/>
            <person name="Gygi S.P."/>
        </authorList>
    </citation>
    <scope>PHOSPHORYLATION [LARGE SCALE ANALYSIS] AT THR-361</scope>
    <scope>IDENTIFICATION BY MASS SPECTROMETRY</scope>
</reference>
<gene>
    <name type="primary">mug191</name>
    <name type="ORF">SPAC3C7.05c</name>
</gene>
<protein>
    <recommendedName>
        <fullName>Meiotically up-regulated gene 191 protein</fullName>
    </recommendedName>
</protein>
<proteinExistence type="evidence at protein level"/>
<evidence type="ECO:0000256" key="1">
    <source>
        <dbReference type="SAM" id="MobiDB-lite"/>
    </source>
</evidence>
<evidence type="ECO:0000269" key="2">
    <source>
    </source>
</evidence>
<evidence type="ECO:0000269" key="3">
    <source>
    </source>
</evidence>
<evidence type="ECO:0000269" key="4">
    <source>
    </source>
</evidence>
<comment type="function">
    <text evidence="2">Has a role in meiosis.</text>
</comment>
<comment type="subcellular location">
    <subcellularLocation>
        <location evidence="3">Cytoplasm</location>
    </subcellularLocation>
    <subcellularLocation>
        <location evidence="3">Nucleus</location>
    </subcellularLocation>
</comment>
<sequence length="442" mass="49780">MSENVYLNEALNVVDQCFKTFFDKYTDRMGSAFACSGTIDKDHIFLVWSVAVYAEAMADSLRYTSKFERKFEHVFQALKKYWSPVFNACCAFHYFEGNDDVYYDDNAQVAIGLATAGYYTTNSSRRDHYVSRAESIISLIINKGWNQQRGGIAWHTRTTGPPWTNLNACSTSMSAVAALRLALALDDPNKKQHLVSFAWNCVRWIQENLLDENHIVCDGLSLKDGKWVLDKARFTYNTGTTMTAMSLLMGLGEFTKGLQDIEKLPTYLEDMARGALDTNGPLYDQSCNGSFKVWSDNTFFAQHLSEGLMTFSYAMPSSALAKPAQKMVLDQADFLMKYLRIPKEGLYYRNFGLYKLSPELTASFNKFFNANKQFQPDKDERIQQEGPVEQRPLCPTLIGSAGAARMLFSAAEIVNRNNPSSGESTTLPQPSHGKKDKDCVIS</sequence>
<organism>
    <name type="scientific">Schizosaccharomyces pombe (strain 972 / ATCC 24843)</name>
    <name type="common">Fission yeast</name>
    <dbReference type="NCBI Taxonomy" id="284812"/>
    <lineage>
        <taxon>Eukaryota</taxon>
        <taxon>Fungi</taxon>
        <taxon>Dikarya</taxon>
        <taxon>Ascomycota</taxon>
        <taxon>Taphrinomycotina</taxon>
        <taxon>Schizosaccharomycetes</taxon>
        <taxon>Schizosaccharomycetales</taxon>
        <taxon>Schizosaccharomycetaceae</taxon>
        <taxon>Schizosaccharomyces</taxon>
    </lineage>
</organism>
<accession>O14131</accession>
<dbReference type="EMBL" id="CU329670">
    <property type="protein sequence ID" value="CAB16736.1"/>
    <property type="molecule type" value="Genomic_DNA"/>
</dbReference>
<dbReference type="PIR" id="T38691">
    <property type="entry name" value="T38691"/>
</dbReference>
<dbReference type="RefSeq" id="NP_593606.1">
    <property type="nucleotide sequence ID" value="NM_001019037.2"/>
</dbReference>
<dbReference type="SMR" id="O14131"/>
<dbReference type="BioGRID" id="279620">
    <property type="interactions" value="4"/>
</dbReference>
<dbReference type="STRING" id="284812.O14131"/>
<dbReference type="CAZy" id="GH76">
    <property type="family name" value="Glycoside Hydrolase Family 76"/>
</dbReference>
<dbReference type="iPTMnet" id="O14131"/>
<dbReference type="PaxDb" id="4896-SPAC3C7.05c.1"/>
<dbReference type="EnsemblFungi" id="SPAC3C7.05c.1">
    <property type="protein sequence ID" value="SPAC3C7.05c.1:pep"/>
    <property type="gene ID" value="SPAC3C7.05c"/>
</dbReference>
<dbReference type="GeneID" id="2543191"/>
<dbReference type="KEGG" id="spo:2543191"/>
<dbReference type="PomBase" id="SPAC3C7.05c">
    <property type="gene designation" value="mug191"/>
</dbReference>
<dbReference type="VEuPathDB" id="FungiDB:SPAC3C7.05c"/>
<dbReference type="eggNOG" id="ENOG502QR9C">
    <property type="taxonomic scope" value="Eukaryota"/>
</dbReference>
<dbReference type="HOGENOM" id="CLU_040051_1_0_1"/>
<dbReference type="InParanoid" id="O14131"/>
<dbReference type="OMA" id="YYDDNAH"/>
<dbReference type="PhylomeDB" id="O14131"/>
<dbReference type="PRO" id="PR:O14131"/>
<dbReference type="Proteomes" id="UP000002485">
    <property type="component" value="Chromosome I"/>
</dbReference>
<dbReference type="GO" id="GO:0009986">
    <property type="term" value="C:cell surface"/>
    <property type="evidence" value="ECO:0000303"/>
    <property type="project" value="PomBase"/>
</dbReference>
<dbReference type="GO" id="GO:0005737">
    <property type="term" value="C:cytoplasm"/>
    <property type="evidence" value="ECO:0007669"/>
    <property type="project" value="UniProtKB-SubCell"/>
</dbReference>
<dbReference type="GO" id="GO:0005634">
    <property type="term" value="C:nucleus"/>
    <property type="evidence" value="ECO:0007669"/>
    <property type="project" value="UniProtKB-SubCell"/>
</dbReference>
<dbReference type="GO" id="GO:0008496">
    <property type="term" value="F:mannan endo-1,6-alpha-mannosidase activity"/>
    <property type="evidence" value="ECO:0000255"/>
    <property type="project" value="PomBase"/>
</dbReference>
<dbReference type="GO" id="GO:0005975">
    <property type="term" value="P:carbohydrate metabolic process"/>
    <property type="evidence" value="ECO:0007669"/>
    <property type="project" value="InterPro"/>
</dbReference>
<dbReference type="GO" id="GO:0051321">
    <property type="term" value="P:meiotic cell cycle"/>
    <property type="evidence" value="ECO:0007669"/>
    <property type="project" value="UniProtKB-KW"/>
</dbReference>
<dbReference type="Gene3D" id="1.50.10.20">
    <property type="match status" value="1"/>
</dbReference>
<dbReference type="InterPro" id="IPR008928">
    <property type="entry name" value="6-hairpin_glycosidase_sf"/>
</dbReference>
<dbReference type="InterPro" id="IPR005198">
    <property type="entry name" value="Glyco_hydro_76"/>
</dbReference>
<dbReference type="InterPro" id="IPR053169">
    <property type="entry name" value="MUG_Protein"/>
</dbReference>
<dbReference type="PANTHER" id="PTHR47791">
    <property type="entry name" value="MEIOTICALLY UP-REGULATED GENE 191 PROTEIN"/>
    <property type="match status" value="1"/>
</dbReference>
<dbReference type="PANTHER" id="PTHR47791:SF3">
    <property type="entry name" value="MEIOTICALLY UP-REGULATED GENE 191 PROTEIN"/>
    <property type="match status" value="1"/>
</dbReference>
<dbReference type="Pfam" id="PF03663">
    <property type="entry name" value="Glyco_hydro_76"/>
    <property type="match status" value="1"/>
</dbReference>
<dbReference type="SUPFAM" id="SSF48208">
    <property type="entry name" value="Six-hairpin glycosidases"/>
    <property type="match status" value="1"/>
</dbReference>